<sequence length="257" mass="28778">MDKCWFTLDNAHYPPPSLDSMRSGHPISPASLGHLIPSLAHLDQIINAKAIEPFPATMDIHGPTIIEDFKWDHSHEYSLSLGGKVPIPLAPAGVPFVDLNVGLGGAFSRSVANYWEFDRLERYIMQPTRSYVQKCIERDEVKRWIAKNKSMMMMGRWEVYMITGIIVARGGGRKKKEKTTGKEFSVEVTVEVPLIVEAGPGGKRNTARQKTWGTSQTGDFVWAVRLAKITKSGLHSDWKMETVFGKTSSFRGQKAIF</sequence>
<name>RCD11_NEUCR</name>
<proteinExistence type="evidence at protein level"/>
<keyword id="KW-0002">3D-structure</keyword>
<keyword id="KW-1003">Cell membrane</keyword>
<keyword id="KW-0963">Cytoplasm</keyword>
<keyword id="KW-0472">Membrane</keyword>
<keyword id="KW-1210">Necrosis</keyword>
<keyword id="KW-1185">Reference proteome</keyword>
<keyword id="KW-0812">Transmembrane</keyword>
<keyword id="KW-1134">Transmembrane beta strand</keyword>
<dbReference type="EMBL" id="CM002238">
    <property type="protein sequence ID" value="EAA33662.1"/>
    <property type="molecule type" value="Genomic_DNA"/>
</dbReference>
<dbReference type="RefSeq" id="XP_962898.1">
    <property type="nucleotide sequence ID" value="XM_957805.2"/>
</dbReference>
<dbReference type="PDB" id="8JYX">
    <property type="method" value="X-ray"/>
    <property type="resolution" value="2.35 A"/>
    <property type="chains" value="A/B=1-257"/>
</dbReference>
<dbReference type="PDB" id="8JYZ">
    <property type="method" value="EM"/>
    <property type="resolution" value="3.63 A"/>
    <property type="chains" value="A/C/E/G/I/K/M/O/Q/S/V=1-257"/>
</dbReference>
<dbReference type="PDBsum" id="8JYX"/>
<dbReference type="PDBsum" id="8JYZ"/>
<dbReference type="EMDB" id="EMD-36734"/>
<dbReference type="SMR" id="Q7SBA0"/>
<dbReference type="STRING" id="367110.Q7SBA0"/>
<dbReference type="PaxDb" id="5141-EFNCRP00000007641"/>
<dbReference type="EnsemblFungi" id="EAA33662">
    <property type="protein sequence ID" value="EAA33662"/>
    <property type="gene ID" value="NCU05712"/>
</dbReference>
<dbReference type="GeneID" id="3879056"/>
<dbReference type="KEGG" id="ncr:NCU05712"/>
<dbReference type="VEuPathDB" id="FungiDB:NCU05712"/>
<dbReference type="HOGENOM" id="CLU_081916_0_0_1"/>
<dbReference type="InParanoid" id="Q7SBA0"/>
<dbReference type="OMA" id="WEFDRLE"/>
<dbReference type="OrthoDB" id="4500473at2759"/>
<dbReference type="Proteomes" id="UP000001805">
    <property type="component" value="Chromosome 3, Linkage Group III"/>
</dbReference>
<dbReference type="GO" id="GO:0005737">
    <property type="term" value="C:cytoplasm"/>
    <property type="evidence" value="ECO:0007669"/>
    <property type="project" value="UniProtKB-SubCell"/>
</dbReference>
<dbReference type="GO" id="GO:0005886">
    <property type="term" value="C:plasma membrane"/>
    <property type="evidence" value="ECO:0000314"/>
    <property type="project" value="UniProtKB"/>
</dbReference>
<dbReference type="GO" id="GO:0046982">
    <property type="term" value="F:protein heterodimerization activity"/>
    <property type="evidence" value="ECO:0000353"/>
    <property type="project" value="UniProtKB"/>
</dbReference>
<dbReference type="GO" id="GO:0022829">
    <property type="term" value="F:wide pore channel activity"/>
    <property type="evidence" value="ECO:0000314"/>
    <property type="project" value="UniProtKB"/>
</dbReference>
<dbReference type="GO" id="GO:0012501">
    <property type="term" value="P:programmed cell death"/>
    <property type="evidence" value="ECO:0007669"/>
    <property type="project" value="UniProtKB-KW"/>
</dbReference>
<evidence type="ECO:0000250" key="1">
    <source>
        <dbReference type="UniProtKB" id="P57764"/>
    </source>
</evidence>
<evidence type="ECO:0000269" key="2">
    <source>
    </source>
</evidence>
<evidence type="ECO:0000269" key="3">
    <source>
    </source>
</evidence>
<evidence type="ECO:0000303" key="4">
    <source>
    </source>
</evidence>
<evidence type="ECO:0000305" key="5"/>
<evidence type="ECO:0000312" key="6">
    <source>
        <dbReference type="EMBL" id="EAA33662.1"/>
    </source>
</evidence>
<evidence type="ECO:0007829" key="7">
    <source>
        <dbReference type="PDB" id="8JYX"/>
    </source>
</evidence>
<comment type="function">
    <text evidence="2 3">Gasdermin-like protein involved in heterokaryon incompatibility, a process that ensures that during spontaneous vegetative cell fusion, only compatible cells from the same colony survive (non-self-recognition) (PubMed:31636083, PubMed:32703806). In N.crassa, the rcd-1 locus exists as 2 incompatible alleles, rcd-1-1 (this entry) and rcd-1-2 (AC P0DW10) (PubMed:31636083). During the allorecognition process, forms a heterooligomer with rcd-1-2, thereby forming a functional gasdermin-like complex that binds to membranes and forms pores, triggering cell death (PubMed:32703806). Binds negatively charged phospholipids, such as cardiolipin and phosphatidylserine (PubMed:32703806). Also binds to phosphoinositides, preferentially to phosphatidylinositol-3-phosphate (PtdIns-3-P), PtdIns-5-P and PtdIns-3,5-P2 (PubMed:32703806).</text>
</comment>
<comment type="subunit">
    <text evidence="3">Heterooligomer; the heterooligomer with rcd-1-2 forms a ring-shaped pore complex when inserted in the membrane.</text>
</comment>
<comment type="subcellular location">
    <subcellularLocation>
        <location evidence="3">Cytoplasm</location>
    </subcellularLocation>
    <subcellularLocation>
        <location evidence="3">Cell membrane</location>
        <topology evidence="1">Multi-pass membrane protein</topology>
    </subcellularLocation>
    <text evidence="3">Cytoplasmic in the absence of rcd-1-2 (PubMed:32703806). Forms a gasdermin-like pore that associates with the cell membrane in the presence of rcd-1-2 (PubMed:32703806).</text>
</comment>
<comment type="similarity">
    <text evidence="5">Belongs to the gasdermin family.</text>
</comment>
<feature type="chain" id="PRO_0000455981" description="Gasdermin-like protein rcd-1-1">
    <location>
        <begin position="1"/>
        <end position="257"/>
    </location>
</feature>
<feature type="mutagenesis site" description="Impaired localization to the cell membrane." evidence="3">
    <original>RSYVQK</original>
    <variation>ASYVQA</variation>
    <location>
        <begin position="129"/>
        <end position="134"/>
    </location>
</feature>
<feature type="mutagenesis site" description="Impaired localization to the cell membrane. Abolished localization to the cell membrane; when associated with A-147--149-A." evidence="3">
    <original>R</original>
    <variation>A</variation>
    <location>
        <position position="129"/>
    </location>
</feature>
<feature type="mutagenesis site" description="Abolished localization to the cell membrane; when associated with A-129." evidence="3">
    <original>KNK</original>
    <variation>ANA</variation>
    <location>
        <begin position="147"/>
        <end position="149"/>
    </location>
</feature>
<feature type="strand" evidence="7">
    <location>
        <begin position="5"/>
        <end position="7"/>
    </location>
</feature>
<feature type="helix" evidence="7">
    <location>
        <begin position="18"/>
        <end position="20"/>
    </location>
</feature>
<feature type="strand" evidence="7">
    <location>
        <begin position="27"/>
        <end position="31"/>
    </location>
</feature>
<feature type="strand" evidence="7">
    <location>
        <begin position="35"/>
        <end position="37"/>
    </location>
</feature>
<feature type="helix" evidence="7">
    <location>
        <begin position="39"/>
        <end position="41"/>
    </location>
</feature>
<feature type="turn" evidence="7">
    <location>
        <begin position="46"/>
        <end position="49"/>
    </location>
</feature>
<feature type="strand" evidence="7">
    <location>
        <begin position="61"/>
        <end position="68"/>
    </location>
</feature>
<feature type="helix" evidence="7">
    <location>
        <begin position="104"/>
        <end position="110"/>
    </location>
</feature>
<feature type="helix" evidence="7">
    <location>
        <begin position="114"/>
        <end position="116"/>
    </location>
</feature>
<feature type="strand" evidence="7">
    <location>
        <begin position="119"/>
        <end position="124"/>
    </location>
</feature>
<feature type="helix" evidence="7">
    <location>
        <begin position="129"/>
        <end position="136"/>
    </location>
</feature>
<feature type="helix" evidence="7">
    <location>
        <begin position="139"/>
        <end position="146"/>
    </location>
</feature>
<feature type="turn" evidence="7">
    <location>
        <begin position="152"/>
        <end position="155"/>
    </location>
</feature>
<feature type="strand" evidence="7">
    <location>
        <begin position="157"/>
        <end position="169"/>
    </location>
</feature>
<feature type="helix" evidence="7">
    <location>
        <begin position="214"/>
        <end position="217"/>
    </location>
</feature>
<feature type="strand" evidence="7">
    <location>
        <begin position="220"/>
        <end position="231"/>
    </location>
</feature>
<feature type="strand" evidence="7">
    <location>
        <begin position="239"/>
        <end position="242"/>
    </location>
</feature>
<reference key="1">
    <citation type="journal article" date="2003" name="Nature">
        <title>The genome sequence of the filamentous fungus Neurospora crassa.</title>
        <authorList>
            <person name="Galagan J.E."/>
            <person name="Calvo S.E."/>
            <person name="Borkovich K.A."/>
            <person name="Selker E.U."/>
            <person name="Read N.D."/>
            <person name="Jaffe D.B."/>
            <person name="FitzHugh W."/>
            <person name="Ma L.-J."/>
            <person name="Smirnov S."/>
            <person name="Purcell S."/>
            <person name="Rehman B."/>
            <person name="Elkins T."/>
            <person name="Engels R."/>
            <person name="Wang S."/>
            <person name="Nielsen C.B."/>
            <person name="Butler J."/>
            <person name="Endrizzi M."/>
            <person name="Qui D."/>
            <person name="Ianakiev P."/>
            <person name="Bell-Pedersen D."/>
            <person name="Nelson M.A."/>
            <person name="Werner-Washburne M."/>
            <person name="Selitrennikoff C.P."/>
            <person name="Kinsey J.A."/>
            <person name="Braun E.L."/>
            <person name="Zelter A."/>
            <person name="Schulte U."/>
            <person name="Kothe G.O."/>
            <person name="Jedd G."/>
            <person name="Mewes H.-W."/>
            <person name="Staben C."/>
            <person name="Marcotte E."/>
            <person name="Greenberg D."/>
            <person name="Roy A."/>
            <person name="Foley K."/>
            <person name="Naylor J."/>
            <person name="Stange-Thomann N."/>
            <person name="Barrett R."/>
            <person name="Gnerre S."/>
            <person name="Kamal M."/>
            <person name="Kamvysselis M."/>
            <person name="Mauceli E.W."/>
            <person name="Bielke C."/>
            <person name="Rudd S."/>
            <person name="Frishman D."/>
            <person name="Krystofova S."/>
            <person name="Rasmussen C."/>
            <person name="Metzenberg R.L."/>
            <person name="Perkins D.D."/>
            <person name="Kroken S."/>
            <person name="Cogoni C."/>
            <person name="Macino G."/>
            <person name="Catcheside D.E.A."/>
            <person name="Li W."/>
            <person name="Pratt R.J."/>
            <person name="Osmani S.A."/>
            <person name="DeSouza C.P.C."/>
            <person name="Glass N.L."/>
            <person name="Orbach M.J."/>
            <person name="Berglund J.A."/>
            <person name="Voelker R."/>
            <person name="Yarden O."/>
            <person name="Plamann M."/>
            <person name="Seiler S."/>
            <person name="Dunlap J.C."/>
            <person name="Radford A."/>
            <person name="Aramayo R."/>
            <person name="Natvig D.O."/>
            <person name="Alex L.A."/>
            <person name="Mannhaupt G."/>
            <person name="Ebbole D.J."/>
            <person name="Freitag M."/>
            <person name="Paulsen I."/>
            <person name="Sachs M.S."/>
            <person name="Lander E.S."/>
            <person name="Nusbaum C."/>
            <person name="Birren B.W."/>
        </authorList>
    </citation>
    <scope>NUCLEOTIDE SEQUENCE [LARGE SCALE GENOMIC DNA]</scope>
    <source>
        <strain>ATCC 24698 / 74-OR23-1A / CBS 708.71 / DSM 1257 / FGSC 987</strain>
    </source>
</reference>
<reference key="2">
    <citation type="journal article" date="2019" name="Genetics">
        <title>Programmed Cell Death in Neurospora crassa Is Controlled by the Allorecognition Determinant rcd-1.</title>
        <authorList>
            <person name="Daskalov A."/>
            <person name="Gladieux P."/>
            <person name="Heller J."/>
            <person name="Glass N.L."/>
        </authorList>
    </citation>
    <scope>FUNCTION</scope>
</reference>
<reference key="3">
    <citation type="journal article" date="2020" name="Proc. Natl. Acad. Sci. U.S.A.">
        <title>Molecular characterization of a fungal gasdermin-like protein.</title>
        <authorList>
            <person name="Daskalov A."/>
            <person name="Mitchell P.S."/>
            <person name="Sandstrom A."/>
            <person name="Vance R.E."/>
            <person name="Glass N.L."/>
        </authorList>
    </citation>
    <scope>FUNCTION</scope>
    <scope>SUBCELLULAR LOCATION</scope>
    <scope>SUBUNIT</scope>
    <scope>MUTAGENESIS OF 129-ARG--LYS-134; ARG-129 AND 147-LYS--LYS-149</scope>
</reference>
<protein>
    <recommendedName>
        <fullName evidence="5">Gasdermin-like protein rcd-1-1</fullName>
    </recommendedName>
    <alternativeName>
        <fullName evidence="4">Regulator of cell death 1-1</fullName>
    </alternativeName>
</protein>
<gene>
    <name evidence="4" type="primary">rcd-1-1</name>
    <name evidence="6" type="ORF">NCU05712</name>
</gene>
<organism>
    <name type="scientific">Neurospora crassa (strain ATCC 24698 / 74-OR23-1A / CBS 708.71 / DSM 1257 / FGSC 987)</name>
    <dbReference type="NCBI Taxonomy" id="367110"/>
    <lineage>
        <taxon>Eukaryota</taxon>
        <taxon>Fungi</taxon>
        <taxon>Dikarya</taxon>
        <taxon>Ascomycota</taxon>
        <taxon>Pezizomycotina</taxon>
        <taxon>Sordariomycetes</taxon>
        <taxon>Sordariomycetidae</taxon>
        <taxon>Sordariales</taxon>
        <taxon>Sordariaceae</taxon>
        <taxon>Neurospora</taxon>
    </lineage>
</organism>
<accession>Q7SBA0</accession>